<proteinExistence type="inferred from homology"/>
<evidence type="ECO:0000255" key="1">
    <source>
        <dbReference type="HAMAP-Rule" id="MF_00031"/>
    </source>
</evidence>
<name>RUVA_HAEIN</name>
<gene>
    <name evidence="1" type="primary">ruvA</name>
    <name type="ordered locus">HI_0313</name>
</gene>
<sequence length="204" mass="22603">MIGRLQGILLEKQPPEILLNVQGVGYELLLPMTSFYDLPEIGQETTLFTHLVVREDAHLLFGFAQKTDRTLFRELIKTNGVGPKLALAILSAMSVEQFAYAIEREELSKLTKIPGVGKKTAERLLVELKGKFKGVKQSDFFVESTHIPLSPSIESHSESSSDEAISALIALGYKPVEAEKMVKRVAKPELTSEQVIREALKVAL</sequence>
<organism>
    <name type="scientific">Haemophilus influenzae (strain ATCC 51907 / DSM 11121 / KW20 / Rd)</name>
    <dbReference type="NCBI Taxonomy" id="71421"/>
    <lineage>
        <taxon>Bacteria</taxon>
        <taxon>Pseudomonadati</taxon>
        <taxon>Pseudomonadota</taxon>
        <taxon>Gammaproteobacteria</taxon>
        <taxon>Pasteurellales</taxon>
        <taxon>Pasteurellaceae</taxon>
        <taxon>Haemophilus</taxon>
    </lineage>
</organism>
<dbReference type="EMBL" id="L42023">
    <property type="protein sequence ID" value="AAC21976.1"/>
    <property type="molecule type" value="Genomic_DNA"/>
</dbReference>
<dbReference type="PIR" id="C64061">
    <property type="entry name" value="C64061"/>
</dbReference>
<dbReference type="RefSeq" id="NP_438479.1">
    <property type="nucleotide sequence ID" value="NC_000907.1"/>
</dbReference>
<dbReference type="SMR" id="P44632"/>
<dbReference type="STRING" id="71421.HI_0313"/>
<dbReference type="EnsemblBacteria" id="AAC21976">
    <property type="protein sequence ID" value="AAC21976"/>
    <property type="gene ID" value="HI_0313"/>
</dbReference>
<dbReference type="KEGG" id="hin:HI_0313"/>
<dbReference type="PATRIC" id="fig|71421.8.peg.330"/>
<dbReference type="eggNOG" id="COG0632">
    <property type="taxonomic scope" value="Bacteria"/>
</dbReference>
<dbReference type="HOGENOM" id="CLU_087936_0_0_6"/>
<dbReference type="OrthoDB" id="5293449at2"/>
<dbReference type="PhylomeDB" id="P44632"/>
<dbReference type="BioCyc" id="HINF71421:G1GJ1-330-MONOMER"/>
<dbReference type="Proteomes" id="UP000000579">
    <property type="component" value="Chromosome"/>
</dbReference>
<dbReference type="GO" id="GO:0005737">
    <property type="term" value="C:cytoplasm"/>
    <property type="evidence" value="ECO:0007669"/>
    <property type="project" value="UniProtKB-SubCell"/>
</dbReference>
<dbReference type="GO" id="GO:0009379">
    <property type="term" value="C:Holliday junction helicase complex"/>
    <property type="evidence" value="ECO:0007669"/>
    <property type="project" value="InterPro"/>
</dbReference>
<dbReference type="GO" id="GO:0048476">
    <property type="term" value="C:Holliday junction resolvase complex"/>
    <property type="evidence" value="ECO:0007669"/>
    <property type="project" value="UniProtKB-UniRule"/>
</dbReference>
<dbReference type="GO" id="GO:0005524">
    <property type="term" value="F:ATP binding"/>
    <property type="evidence" value="ECO:0007669"/>
    <property type="project" value="InterPro"/>
</dbReference>
<dbReference type="GO" id="GO:0000400">
    <property type="term" value="F:four-way junction DNA binding"/>
    <property type="evidence" value="ECO:0007669"/>
    <property type="project" value="UniProtKB-UniRule"/>
</dbReference>
<dbReference type="GO" id="GO:0009378">
    <property type="term" value="F:four-way junction helicase activity"/>
    <property type="evidence" value="ECO:0000318"/>
    <property type="project" value="GO_Central"/>
</dbReference>
<dbReference type="GO" id="GO:0006310">
    <property type="term" value="P:DNA recombination"/>
    <property type="evidence" value="ECO:0007669"/>
    <property type="project" value="UniProtKB-UniRule"/>
</dbReference>
<dbReference type="GO" id="GO:0006281">
    <property type="term" value="P:DNA repair"/>
    <property type="evidence" value="ECO:0007669"/>
    <property type="project" value="UniProtKB-UniRule"/>
</dbReference>
<dbReference type="GO" id="GO:0009432">
    <property type="term" value="P:SOS response"/>
    <property type="evidence" value="ECO:0000270"/>
    <property type="project" value="CollecTF"/>
</dbReference>
<dbReference type="CDD" id="cd14332">
    <property type="entry name" value="UBA_RuvA_C"/>
    <property type="match status" value="1"/>
</dbReference>
<dbReference type="FunFam" id="2.40.50.140:FF:000083">
    <property type="entry name" value="Holliday junction ATP-dependent DNA helicase RuvA"/>
    <property type="match status" value="1"/>
</dbReference>
<dbReference type="Gene3D" id="1.10.150.20">
    <property type="entry name" value="5' to 3' exonuclease, C-terminal subdomain"/>
    <property type="match status" value="1"/>
</dbReference>
<dbReference type="Gene3D" id="1.10.8.10">
    <property type="entry name" value="DNA helicase RuvA subunit, C-terminal domain"/>
    <property type="match status" value="1"/>
</dbReference>
<dbReference type="Gene3D" id="2.40.50.140">
    <property type="entry name" value="Nucleic acid-binding proteins"/>
    <property type="match status" value="1"/>
</dbReference>
<dbReference type="HAMAP" id="MF_00031">
    <property type="entry name" value="DNA_HJ_migration_RuvA"/>
    <property type="match status" value="1"/>
</dbReference>
<dbReference type="InterPro" id="IPR013849">
    <property type="entry name" value="DNA_helicase_Holl-junc_RuvA_I"/>
</dbReference>
<dbReference type="InterPro" id="IPR003583">
    <property type="entry name" value="Hlx-hairpin-Hlx_DNA-bd_motif"/>
</dbReference>
<dbReference type="InterPro" id="IPR012340">
    <property type="entry name" value="NA-bd_OB-fold"/>
</dbReference>
<dbReference type="InterPro" id="IPR000085">
    <property type="entry name" value="RuvA"/>
</dbReference>
<dbReference type="InterPro" id="IPR010994">
    <property type="entry name" value="RuvA_2-like"/>
</dbReference>
<dbReference type="InterPro" id="IPR011114">
    <property type="entry name" value="RuvA_C"/>
</dbReference>
<dbReference type="InterPro" id="IPR036267">
    <property type="entry name" value="RuvA_C_sf"/>
</dbReference>
<dbReference type="NCBIfam" id="TIGR00084">
    <property type="entry name" value="ruvA"/>
    <property type="match status" value="1"/>
</dbReference>
<dbReference type="Pfam" id="PF14520">
    <property type="entry name" value="HHH_5"/>
    <property type="match status" value="1"/>
</dbReference>
<dbReference type="Pfam" id="PF07499">
    <property type="entry name" value="RuvA_C"/>
    <property type="match status" value="1"/>
</dbReference>
<dbReference type="Pfam" id="PF01330">
    <property type="entry name" value="RuvA_N"/>
    <property type="match status" value="1"/>
</dbReference>
<dbReference type="SMART" id="SM00278">
    <property type="entry name" value="HhH1"/>
    <property type="match status" value="2"/>
</dbReference>
<dbReference type="SUPFAM" id="SSF46929">
    <property type="entry name" value="DNA helicase RuvA subunit, C-terminal domain"/>
    <property type="match status" value="1"/>
</dbReference>
<dbReference type="SUPFAM" id="SSF50249">
    <property type="entry name" value="Nucleic acid-binding proteins"/>
    <property type="match status" value="1"/>
</dbReference>
<dbReference type="SUPFAM" id="SSF47781">
    <property type="entry name" value="RuvA domain 2-like"/>
    <property type="match status" value="1"/>
</dbReference>
<comment type="function">
    <text evidence="1">The RuvA-RuvB-RuvC complex processes Holliday junction (HJ) DNA during genetic recombination and DNA repair, while the RuvA-RuvB complex plays an important role in the rescue of blocked DNA replication forks via replication fork reversal (RFR). RuvA specifically binds to HJ cruciform DNA, conferring on it an open structure. The RuvB hexamer acts as an ATP-dependent pump, pulling dsDNA into and through the RuvAB complex. HJ branch migration allows RuvC to scan DNA until it finds its consensus sequence, where it cleaves and resolves the cruciform DNA.</text>
</comment>
<comment type="subunit">
    <text evidence="1">Homotetramer. Forms an RuvA(8)-RuvB(12)-Holliday junction (HJ) complex. HJ DNA is sandwiched between 2 RuvA tetramers; dsDNA enters through RuvA and exits via RuvB. An RuvB hexamer assembles on each DNA strand where it exits the tetramer. Each RuvB hexamer is contacted by two RuvA subunits (via domain III) on 2 adjacent RuvB subunits; this complex drives branch migration. In the full resolvosome a probable DNA-RuvA(4)-RuvB(12)-RuvC(2) complex forms which resolves the HJ.</text>
</comment>
<comment type="subcellular location">
    <subcellularLocation>
        <location evidence="1">Cytoplasm</location>
    </subcellularLocation>
</comment>
<comment type="domain">
    <text evidence="1">Has three domains with a flexible linker between the domains II and III and assumes an 'L' shape. Domain III is highly mobile and contacts RuvB.</text>
</comment>
<comment type="similarity">
    <text evidence="1">Belongs to the RuvA family.</text>
</comment>
<keyword id="KW-0963">Cytoplasm</keyword>
<keyword id="KW-0227">DNA damage</keyword>
<keyword id="KW-0233">DNA recombination</keyword>
<keyword id="KW-0234">DNA repair</keyword>
<keyword id="KW-0238">DNA-binding</keyword>
<keyword id="KW-1185">Reference proteome</keyword>
<accession>P44632</accession>
<reference key="1">
    <citation type="journal article" date="1995" name="Science">
        <title>Whole-genome random sequencing and assembly of Haemophilus influenzae Rd.</title>
        <authorList>
            <person name="Fleischmann R.D."/>
            <person name="Adams M.D."/>
            <person name="White O."/>
            <person name="Clayton R.A."/>
            <person name="Kirkness E.F."/>
            <person name="Kerlavage A.R."/>
            <person name="Bult C.J."/>
            <person name="Tomb J.-F."/>
            <person name="Dougherty B.A."/>
            <person name="Merrick J.M."/>
            <person name="McKenney K."/>
            <person name="Sutton G.G."/>
            <person name="FitzHugh W."/>
            <person name="Fields C.A."/>
            <person name="Gocayne J.D."/>
            <person name="Scott J.D."/>
            <person name="Shirley R."/>
            <person name="Liu L.-I."/>
            <person name="Glodek A."/>
            <person name="Kelley J.M."/>
            <person name="Weidman J.F."/>
            <person name="Phillips C.A."/>
            <person name="Spriggs T."/>
            <person name="Hedblom E."/>
            <person name="Cotton M.D."/>
            <person name="Utterback T.R."/>
            <person name="Hanna M.C."/>
            <person name="Nguyen D.T."/>
            <person name="Saudek D.M."/>
            <person name="Brandon R.C."/>
            <person name="Fine L.D."/>
            <person name="Fritchman J.L."/>
            <person name="Fuhrmann J.L."/>
            <person name="Geoghagen N.S.M."/>
            <person name="Gnehm C.L."/>
            <person name="McDonald L.A."/>
            <person name="Small K.V."/>
            <person name="Fraser C.M."/>
            <person name="Smith H.O."/>
            <person name="Venter J.C."/>
        </authorList>
    </citation>
    <scope>NUCLEOTIDE SEQUENCE [LARGE SCALE GENOMIC DNA]</scope>
    <source>
        <strain>ATCC 51907 / DSM 11121 / KW20 / Rd</strain>
    </source>
</reference>
<feature type="chain" id="PRO_0000094636" description="Holliday junction branch migration complex subunit RuvA">
    <location>
        <begin position="1"/>
        <end position="204"/>
    </location>
</feature>
<feature type="region of interest" description="Domain I" evidence="1">
    <location>
        <begin position="1"/>
        <end position="64"/>
    </location>
</feature>
<feature type="region of interest" description="Domain II" evidence="1">
    <location>
        <begin position="65"/>
        <end position="143"/>
    </location>
</feature>
<feature type="region of interest" description="Flexible linker" evidence="1">
    <location>
        <begin position="144"/>
        <end position="155"/>
    </location>
</feature>
<feature type="region of interest" description="Domain III" evidence="1">
    <location>
        <begin position="156"/>
        <end position="204"/>
    </location>
</feature>
<protein>
    <recommendedName>
        <fullName evidence="1">Holliday junction branch migration complex subunit RuvA</fullName>
    </recommendedName>
</protein>